<protein>
    <recommendedName>
        <fullName evidence="1">dCTP deaminase</fullName>
        <ecNumber evidence="1">3.5.4.13</ecNumber>
    </recommendedName>
    <alternativeName>
        <fullName evidence="1">Deoxycytidine triphosphate deaminase</fullName>
    </alternativeName>
</protein>
<sequence>MSIKSDKWIRRMAEEHNMIEPFAPNQVRATEDGRKIVSYGTSSYGYDIRCADEFKIFTNINSTIVDPKNFDEKSFVDFKGDVCIIPPNSFALARTVEYFRIPRSVLTVCLGKSTYARCGIIVNVTPFEPEWEGHVTLEFSNTTPLPAKIYANEGVAQVLFFESDEICDVSYADRGGKYQGQHGVTLPKT</sequence>
<organism>
    <name type="scientific">Paraburkholderia phymatum (strain DSM 17167 / CIP 108236 / LMG 21445 / STM815)</name>
    <name type="common">Burkholderia phymatum</name>
    <dbReference type="NCBI Taxonomy" id="391038"/>
    <lineage>
        <taxon>Bacteria</taxon>
        <taxon>Pseudomonadati</taxon>
        <taxon>Pseudomonadota</taxon>
        <taxon>Betaproteobacteria</taxon>
        <taxon>Burkholderiales</taxon>
        <taxon>Burkholderiaceae</taxon>
        <taxon>Paraburkholderia</taxon>
    </lineage>
</organism>
<proteinExistence type="inferred from homology"/>
<gene>
    <name evidence="1" type="primary">dcd</name>
    <name type="ordered locus">Bphy_2187</name>
</gene>
<comment type="function">
    <text evidence="1">Catalyzes the deamination of dCTP to dUTP.</text>
</comment>
<comment type="catalytic activity">
    <reaction evidence="1">
        <text>dCTP + H2O + H(+) = dUTP + NH4(+)</text>
        <dbReference type="Rhea" id="RHEA:22680"/>
        <dbReference type="ChEBI" id="CHEBI:15377"/>
        <dbReference type="ChEBI" id="CHEBI:15378"/>
        <dbReference type="ChEBI" id="CHEBI:28938"/>
        <dbReference type="ChEBI" id="CHEBI:61481"/>
        <dbReference type="ChEBI" id="CHEBI:61555"/>
        <dbReference type="EC" id="3.5.4.13"/>
    </reaction>
</comment>
<comment type="pathway">
    <text evidence="1">Pyrimidine metabolism; dUMP biosynthesis; dUMP from dCTP (dUTP route): step 1/2.</text>
</comment>
<comment type="subunit">
    <text evidence="1">Homotrimer.</text>
</comment>
<comment type="similarity">
    <text evidence="1">Belongs to the dCTP deaminase family.</text>
</comment>
<name>DCD_PARP8</name>
<accession>B2JEP7</accession>
<reference key="1">
    <citation type="journal article" date="2014" name="Stand. Genomic Sci.">
        <title>Complete genome sequence of Burkholderia phymatum STM815(T), a broad host range and efficient nitrogen-fixing symbiont of Mimosa species.</title>
        <authorList>
            <person name="Moulin L."/>
            <person name="Klonowska A."/>
            <person name="Caroline B."/>
            <person name="Booth K."/>
            <person name="Vriezen J.A."/>
            <person name="Melkonian R."/>
            <person name="James E.K."/>
            <person name="Young J.P."/>
            <person name="Bena G."/>
            <person name="Hauser L."/>
            <person name="Land M."/>
            <person name="Kyrpides N."/>
            <person name="Bruce D."/>
            <person name="Chain P."/>
            <person name="Copeland A."/>
            <person name="Pitluck S."/>
            <person name="Woyke T."/>
            <person name="Lizotte-Waniewski M."/>
            <person name="Bristow J."/>
            <person name="Riley M."/>
        </authorList>
    </citation>
    <scope>NUCLEOTIDE SEQUENCE [LARGE SCALE GENOMIC DNA]</scope>
    <source>
        <strain>DSM 17167 / CIP 108236 / LMG 21445 / STM815</strain>
    </source>
</reference>
<dbReference type="EC" id="3.5.4.13" evidence="1"/>
<dbReference type="EMBL" id="CP001043">
    <property type="protein sequence ID" value="ACC71362.1"/>
    <property type="molecule type" value="Genomic_DNA"/>
</dbReference>
<dbReference type="RefSeq" id="WP_012401568.1">
    <property type="nucleotide sequence ID" value="NC_010622.1"/>
</dbReference>
<dbReference type="SMR" id="B2JEP7"/>
<dbReference type="STRING" id="391038.Bphy_2187"/>
<dbReference type="KEGG" id="bph:Bphy_2187"/>
<dbReference type="eggNOG" id="COG0717">
    <property type="taxonomic scope" value="Bacteria"/>
</dbReference>
<dbReference type="HOGENOM" id="CLU_087476_4_0_4"/>
<dbReference type="OrthoDB" id="9780956at2"/>
<dbReference type="UniPathway" id="UPA00610">
    <property type="reaction ID" value="UER00665"/>
</dbReference>
<dbReference type="Proteomes" id="UP000001192">
    <property type="component" value="Chromosome 1"/>
</dbReference>
<dbReference type="GO" id="GO:0008829">
    <property type="term" value="F:dCTP deaminase activity"/>
    <property type="evidence" value="ECO:0007669"/>
    <property type="project" value="UniProtKB-UniRule"/>
</dbReference>
<dbReference type="GO" id="GO:0000166">
    <property type="term" value="F:nucleotide binding"/>
    <property type="evidence" value="ECO:0007669"/>
    <property type="project" value="UniProtKB-KW"/>
</dbReference>
<dbReference type="GO" id="GO:0006226">
    <property type="term" value="P:dUMP biosynthetic process"/>
    <property type="evidence" value="ECO:0007669"/>
    <property type="project" value="UniProtKB-UniPathway"/>
</dbReference>
<dbReference type="GO" id="GO:0006229">
    <property type="term" value="P:dUTP biosynthetic process"/>
    <property type="evidence" value="ECO:0007669"/>
    <property type="project" value="UniProtKB-UniRule"/>
</dbReference>
<dbReference type="GO" id="GO:0015949">
    <property type="term" value="P:nucleobase-containing small molecule interconversion"/>
    <property type="evidence" value="ECO:0007669"/>
    <property type="project" value="TreeGrafter"/>
</dbReference>
<dbReference type="CDD" id="cd07557">
    <property type="entry name" value="trimeric_dUTPase"/>
    <property type="match status" value="1"/>
</dbReference>
<dbReference type="FunFam" id="2.70.40.10:FF:000001">
    <property type="entry name" value="dCTP deaminase"/>
    <property type="match status" value="1"/>
</dbReference>
<dbReference type="Gene3D" id="2.70.40.10">
    <property type="match status" value="1"/>
</dbReference>
<dbReference type="HAMAP" id="MF_00146">
    <property type="entry name" value="dCTP_deaminase"/>
    <property type="match status" value="1"/>
</dbReference>
<dbReference type="InterPro" id="IPR011962">
    <property type="entry name" value="dCTP_deaminase"/>
</dbReference>
<dbReference type="InterPro" id="IPR036157">
    <property type="entry name" value="dUTPase-like_sf"/>
</dbReference>
<dbReference type="InterPro" id="IPR033704">
    <property type="entry name" value="dUTPase_trimeric"/>
</dbReference>
<dbReference type="NCBIfam" id="TIGR02274">
    <property type="entry name" value="dCTP_deam"/>
    <property type="match status" value="1"/>
</dbReference>
<dbReference type="PANTHER" id="PTHR42680">
    <property type="entry name" value="DCTP DEAMINASE"/>
    <property type="match status" value="1"/>
</dbReference>
<dbReference type="PANTHER" id="PTHR42680:SF3">
    <property type="entry name" value="DCTP DEAMINASE"/>
    <property type="match status" value="1"/>
</dbReference>
<dbReference type="Pfam" id="PF22769">
    <property type="entry name" value="DCD"/>
    <property type="match status" value="1"/>
</dbReference>
<dbReference type="SUPFAM" id="SSF51283">
    <property type="entry name" value="dUTPase-like"/>
    <property type="match status" value="1"/>
</dbReference>
<keyword id="KW-0378">Hydrolase</keyword>
<keyword id="KW-0546">Nucleotide metabolism</keyword>
<keyword id="KW-0547">Nucleotide-binding</keyword>
<keyword id="KW-1185">Reference proteome</keyword>
<feature type="chain" id="PRO_1000096412" description="dCTP deaminase">
    <location>
        <begin position="1"/>
        <end position="189"/>
    </location>
</feature>
<feature type="active site" description="Proton donor/acceptor" evidence="1">
    <location>
        <position position="138"/>
    </location>
</feature>
<feature type="binding site" evidence="1">
    <location>
        <begin position="112"/>
        <end position="117"/>
    </location>
    <ligand>
        <name>dCTP</name>
        <dbReference type="ChEBI" id="CHEBI:61481"/>
    </ligand>
</feature>
<feature type="binding site" evidence="1">
    <location>
        <begin position="136"/>
        <end position="138"/>
    </location>
    <ligand>
        <name>dCTP</name>
        <dbReference type="ChEBI" id="CHEBI:61481"/>
    </ligand>
</feature>
<feature type="binding site" evidence="1">
    <location>
        <position position="157"/>
    </location>
    <ligand>
        <name>dCTP</name>
        <dbReference type="ChEBI" id="CHEBI:61481"/>
    </ligand>
</feature>
<feature type="binding site" evidence="1">
    <location>
        <position position="171"/>
    </location>
    <ligand>
        <name>dCTP</name>
        <dbReference type="ChEBI" id="CHEBI:61481"/>
    </ligand>
</feature>
<feature type="binding site" evidence="1">
    <location>
        <position position="181"/>
    </location>
    <ligand>
        <name>dCTP</name>
        <dbReference type="ChEBI" id="CHEBI:61481"/>
    </ligand>
</feature>
<evidence type="ECO:0000255" key="1">
    <source>
        <dbReference type="HAMAP-Rule" id="MF_00146"/>
    </source>
</evidence>